<keyword id="KW-0963">Cytoplasm</keyword>
<keyword id="KW-1185">Reference proteome</keyword>
<keyword id="KW-0687">Ribonucleoprotein</keyword>
<keyword id="KW-0689">Ribosomal protein</keyword>
<reference key="1">
    <citation type="submission" date="2007-03" db="EMBL/GenBank/DDBJ databases">
        <title>Annotation of Culex pipiens quinquefasciatus.</title>
        <authorList>
            <consortium name="The Broad Institute Genome Sequencing Platform"/>
            <person name="Atkinson P.W."/>
            <person name="Hemingway J."/>
            <person name="Christensen B.M."/>
            <person name="Higgs S."/>
            <person name="Kodira C.D."/>
            <person name="Hannick L.I."/>
            <person name="Megy K."/>
            <person name="O'Leary S.B."/>
            <person name="Pearson M."/>
            <person name="Haas B.J."/>
            <person name="Mauceli E."/>
            <person name="Wortman J.R."/>
            <person name="Lee N.H."/>
            <person name="Guigo R."/>
            <person name="Stanke M."/>
            <person name="Alvarado L."/>
            <person name="Amedeo P."/>
            <person name="Antoine C.H."/>
            <person name="Arensburger P."/>
            <person name="Bidwell S.L."/>
            <person name="Crawford M."/>
            <person name="Camaro F."/>
            <person name="Devon K."/>
            <person name="Engels R."/>
            <person name="Hammond M."/>
            <person name="Howarth C."/>
            <person name="Koehrsen M."/>
            <person name="Lawson D."/>
            <person name="Montgomery P."/>
            <person name="Nene V."/>
            <person name="Nusbaum C."/>
            <person name="Puiu D."/>
            <person name="Romero-Severson J."/>
            <person name="Severson D.W."/>
            <person name="Shumway M."/>
            <person name="Sisk P."/>
            <person name="Stolte C."/>
            <person name="Zeng Q."/>
            <person name="Eisenstadt E."/>
            <person name="Fraser-Liggett C.M."/>
            <person name="Strausberg R."/>
            <person name="Galagan J."/>
            <person name="Birren B."/>
            <person name="Collins F.H."/>
        </authorList>
    </citation>
    <scope>NUCLEOTIDE SEQUENCE [LARGE SCALE GENOMIC DNA]</scope>
    <source>
        <strain>JHB</strain>
    </source>
</reference>
<proteinExistence type="inferred from homology"/>
<feature type="initiator methionine" description="Removed" evidence="1">
    <location>
        <position position="1"/>
    </location>
</feature>
<feature type="chain" id="PRO_0000371578" description="Small ribosomal subunit protein uS2">
    <location>
        <begin position="2"/>
        <end position="290"/>
    </location>
</feature>
<evidence type="ECO:0000255" key="1">
    <source>
        <dbReference type="HAMAP-Rule" id="MF_03015"/>
    </source>
</evidence>
<evidence type="ECO:0000305" key="2"/>
<comment type="function">
    <text evidence="1">Required for the assembly and/or stability of the 40S ribosomal subunit. Required for the processing of the 20S rRNA-precursor to mature 18S rRNA in a late step of the maturation of 40S ribosomal subunits.</text>
</comment>
<comment type="subunit">
    <text evidence="1">Component of the small ribosomal subunit. Mature ribosomes consist of a small (40S) and a large (60S) subunit. The 40S subunit contains about 33 different proteins and 1 molecule of RNA (18S). The 60S subunit contains about 49 different proteins and 3 molecules of RNA (28S, 5.8S and 5S). Interacts with ribosomal protein S21.</text>
</comment>
<comment type="subcellular location">
    <subcellularLocation>
        <location evidence="1">Cytoplasm</location>
    </subcellularLocation>
</comment>
<comment type="similarity">
    <text evidence="1">Belongs to the universal ribosomal protein uS2 family.</text>
</comment>
<comment type="sequence caution" evidence="2">
    <conflict type="erroneous gene model prediction">
        <sequence resource="EMBL-CDS" id="EDS41621"/>
    </conflict>
</comment>
<dbReference type="EMBL" id="DS232425">
    <property type="protein sequence ID" value="EDS41621.1"/>
    <property type="status" value="ALT_SEQ"/>
    <property type="molecule type" value="Genomic_DNA"/>
</dbReference>
<dbReference type="RefSeq" id="XP_001865372.1">
    <property type="nucleotide sequence ID" value="XM_001865337.1"/>
</dbReference>
<dbReference type="SMR" id="B0X6V0"/>
<dbReference type="FunCoup" id="B0X6V0">
    <property type="interactions" value="1316"/>
</dbReference>
<dbReference type="STRING" id="7176.B0X6V0"/>
<dbReference type="EnsemblMetazoa" id="CQUJHB006651.R10220">
    <property type="protein sequence ID" value="CQUJHB006651.P10220"/>
    <property type="gene ID" value="CQUJHB006651"/>
</dbReference>
<dbReference type="EnsemblMetazoa" id="XM_038266723.1">
    <property type="protein sequence ID" value="XP_038122651.1"/>
    <property type="gene ID" value="LOC6048459"/>
</dbReference>
<dbReference type="KEGG" id="cqu:CpipJ_CPIJ013899"/>
<dbReference type="VEuPathDB" id="VectorBase:CPIJ013899"/>
<dbReference type="VEuPathDB" id="VectorBase:CQUJHB006651"/>
<dbReference type="eggNOG" id="KOG0830">
    <property type="taxonomic scope" value="Eukaryota"/>
</dbReference>
<dbReference type="HOGENOM" id="CLU_058171_1_0_1"/>
<dbReference type="InParanoid" id="B0X6V0"/>
<dbReference type="OrthoDB" id="414863at2759"/>
<dbReference type="Proteomes" id="UP000002320">
    <property type="component" value="Unassembled WGS sequence"/>
</dbReference>
<dbReference type="GO" id="GO:0022627">
    <property type="term" value="C:cytosolic small ribosomal subunit"/>
    <property type="evidence" value="ECO:0007669"/>
    <property type="project" value="UniProtKB-UniRule"/>
</dbReference>
<dbReference type="GO" id="GO:0003735">
    <property type="term" value="F:structural constituent of ribosome"/>
    <property type="evidence" value="ECO:0007669"/>
    <property type="project" value="UniProtKB-UniRule"/>
</dbReference>
<dbReference type="GO" id="GO:0000028">
    <property type="term" value="P:ribosomal small subunit assembly"/>
    <property type="evidence" value="ECO:0007669"/>
    <property type="project" value="UniProtKB-UniRule"/>
</dbReference>
<dbReference type="GO" id="GO:0006412">
    <property type="term" value="P:translation"/>
    <property type="evidence" value="ECO:0007669"/>
    <property type="project" value="UniProtKB-UniRule"/>
</dbReference>
<dbReference type="CDD" id="cd01425">
    <property type="entry name" value="RPS2"/>
    <property type="match status" value="1"/>
</dbReference>
<dbReference type="FunFam" id="3.40.50.10490:FF:000012">
    <property type="entry name" value="40S ribosomal protein SA"/>
    <property type="match status" value="1"/>
</dbReference>
<dbReference type="Gene3D" id="3.40.50.10490">
    <property type="entry name" value="Glucose-6-phosphate isomerase like protein, domain 1"/>
    <property type="match status" value="1"/>
</dbReference>
<dbReference type="HAMAP" id="MF_03015">
    <property type="entry name" value="Ribosomal_S2_euk"/>
    <property type="match status" value="1"/>
</dbReference>
<dbReference type="InterPro" id="IPR001865">
    <property type="entry name" value="Ribosomal_uS2"/>
</dbReference>
<dbReference type="InterPro" id="IPR032281">
    <property type="entry name" value="Ribosomal_uS2_C"/>
</dbReference>
<dbReference type="InterPro" id="IPR018130">
    <property type="entry name" value="Ribosomal_uS2_CS"/>
</dbReference>
<dbReference type="InterPro" id="IPR027498">
    <property type="entry name" value="Ribosomal_uS2_euk"/>
</dbReference>
<dbReference type="InterPro" id="IPR005707">
    <property type="entry name" value="Ribosomal_uS2_euk/arc"/>
</dbReference>
<dbReference type="InterPro" id="IPR023591">
    <property type="entry name" value="Ribosomal_uS2_flav_dom_sf"/>
</dbReference>
<dbReference type="NCBIfam" id="TIGR01012">
    <property type="entry name" value="uS2_euk_arch"/>
    <property type="match status" value="1"/>
</dbReference>
<dbReference type="PANTHER" id="PTHR11489">
    <property type="entry name" value="40S RIBOSOMAL PROTEIN SA"/>
    <property type="match status" value="1"/>
</dbReference>
<dbReference type="Pfam" id="PF16122">
    <property type="entry name" value="40S_SA_C"/>
    <property type="match status" value="1"/>
</dbReference>
<dbReference type="Pfam" id="PF00318">
    <property type="entry name" value="Ribosomal_S2"/>
    <property type="match status" value="2"/>
</dbReference>
<dbReference type="PRINTS" id="PR00395">
    <property type="entry name" value="RIBOSOMALS2"/>
</dbReference>
<dbReference type="SUPFAM" id="SSF52313">
    <property type="entry name" value="Ribosomal protein S2"/>
    <property type="match status" value="1"/>
</dbReference>
<dbReference type="PROSITE" id="PS00962">
    <property type="entry name" value="RIBOSOMAL_S2_1"/>
    <property type="match status" value="1"/>
</dbReference>
<dbReference type="PROSITE" id="PS00963">
    <property type="entry name" value="RIBOSOMAL_S2_2"/>
    <property type="match status" value="1"/>
</dbReference>
<name>RSSA_CULQU</name>
<protein>
    <recommendedName>
        <fullName evidence="1">Small ribosomal subunit protein uS2</fullName>
    </recommendedName>
    <alternativeName>
        <fullName evidence="2">40S ribosomal protein SA</fullName>
    </alternativeName>
</protein>
<accession>B0X6V0</accession>
<organism>
    <name type="scientific">Culex quinquefasciatus</name>
    <name type="common">Southern house mosquito</name>
    <name type="synonym">Culex pungens</name>
    <dbReference type="NCBI Taxonomy" id="7176"/>
    <lineage>
        <taxon>Eukaryota</taxon>
        <taxon>Metazoa</taxon>
        <taxon>Ecdysozoa</taxon>
        <taxon>Arthropoda</taxon>
        <taxon>Hexapoda</taxon>
        <taxon>Insecta</taxon>
        <taxon>Pterygota</taxon>
        <taxon>Neoptera</taxon>
        <taxon>Endopterygota</taxon>
        <taxon>Diptera</taxon>
        <taxon>Nematocera</taxon>
        <taxon>Culicoidea</taxon>
        <taxon>Culicidae</taxon>
        <taxon>Culicinae</taxon>
        <taxon>Culicini</taxon>
        <taxon>Culex</taxon>
        <taxon>Culex</taxon>
    </lineage>
</organism>
<sequence length="290" mass="31699">MSGNLDILALKDDDVNKMLAATTHVGSTSVNFQMESYVFKRRPDGVHIINLGRTWEKLLLAARCIASIEYPGEVFAISSRQFGQRAVLKFAHYTEATPIAGRFTPGAFTNQIQPAFREPRLLIVTDPLTDHQPVTEASYVNIPVIAFCNTDSPLKFVDIAIPCNTKSPHSIGLMWWLLAREVLKLRGKISDKWELKPDLFFYRDPEEQEKEQAALLEAAPAAKEMYTDEPIPAVEEGGNWGEEAAPAAPAAAAAVPAVAGAAIPQMIQADDWNEDETQTAGSWGGATGGF</sequence>
<gene>
    <name type="ORF">CPIJ013899</name>
</gene>